<accession>Q2RJX9</accession>
<dbReference type="EC" id="2.3.1.274" evidence="1"/>
<dbReference type="EMBL" id="CP000232">
    <property type="protein sequence ID" value="ABC19260.1"/>
    <property type="molecule type" value="Genomic_DNA"/>
</dbReference>
<dbReference type="RefSeq" id="YP_429803.1">
    <property type="nucleotide sequence ID" value="NC_007644.1"/>
</dbReference>
<dbReference type="SMR" id="Q2RJX9"/>
<dbReference type="STRING" id="264732.Moth_0944"/>
<dbReference type="EnsemblBacteria" id="ABC19260">
    <property type="protein sequence ID" value="ABC19260"/>
    <property type="gene ID" value="Moth_0944"/>
</dbReference>
<dbReference type="KEGG" id="mta:Moth_0944"/>
<dbReference type="PATRIC" id="fig|264732.11.peg.1016"/>
<dbReference type="eggNOG" id="COG0416">
    <property type="taxonomic scope" value="Bacteria"/>
</dbReference>
<dbReference type="HOGENOM" id="CLU_039379_1_1_9"/>
<dbReference type="OrthoDB" id="9806408at2"/>
<dbReference type="UniPathway" id="UPA00085"/>
<dbReference type="GO" id="GO:0005737">
    <property type="term" value="C:cytoplasm"/>
    <property type="evidence" value="ECO:0007669"/>
    <property type="project" value="UniProtKB-SubCell"/>
</dbReference>
<dbReference type="GO" id="GO:0043811">
    <property type="term" value="F:phosphate:acyl-[acyl carrier protein] acyltransferase activity"/>
    <property type="evidence" value="ECO:0007669"/>
    <property type="project" value="UniProtKB-UniRule"/>
</dbReference>
<dbReference type="GO" id="GO:0006633">
    <property type="term" value="P:fatty acid biosynthetic process"/>
    <property type="evidence" value="ECO:0007669"/>
    <property type="project" value="UniProtKB-UniRule"/>
</dbReference>
<dbReference type="GO" id="GO:0008654">
    <property type="term" value="P:phospholipid biosynthetic process"/>
    <property type="evidence" value="ECO:0007669"/>
    <property type="project" value="UniProtKB-KW"/>
</dbReference>
<dbReference type="Gene3D" id="3.40.718.10">
    <property type="entry name" value="Isopropylmalate Dehydrogenase"/>
    <property type="match status" value="1"/>
</dbReference>
<dbReference type="HAMAP" id="MF_00019">
    <property type="entry name" value="PlsX"/>
    <property type="match status" value="1"/>
</dbReference>
<dbReference type="InterPro" id="IPR003664">
    <property type="entry name" value="FA_synthesis"/>
</dbReference>
<dbReference type="InterPro" id="IPR012281">
    <property type="entry name" value="Phospholipid_synth_PlsX-like"/>
</dbReference>
<dbReference type="NCBIfam" id="TIGR00182">
    <property type="entry name" value="plsX"/>
    <property type="match status" value="1"/>
</dbReference>
<dbReference type="PANTHER" id="PTHR30100">
    <property type="entry name" value="FATTY ACID/PHOSPHOLIPID SYNTHESIS PROTEIN PLSX"/>
    <property type="match status" value="1"/>
</dbReference>
<dbReference type="PANTHER" id="PTHR30100:SF1">
    <property type="entry name" value="PHOSPHATE ACYLTRANSFERASE"/>
    <property type="match status" value="1"/>
</dbReference>
<dbReference type="Pfam" id="PF02504">
    <property type="entry name" value="FA_synthesis"/>
    <property type="match status" value="1"/>
</dbReference>
<dbReference type="PIRSF" id="PIRSF002465">
    <property type="entry name" value="Phsphlp_syn_PlsX"/>
    <property type="match status" value="1"/>
</dbReference>
<dbReference type="SUPFAM" id="SSF53659">
    <property type="entry name" value="Isocitrate/Isopropylmalate dehydrogenase-like"/>
    <property type="match status" value="1"/>
</dbReference>
<feature type="chain" id="PRO_1000001788" description="Phosphate acyltransferase">
    <location>
        <begin position="1"/>
        <end position="339"/>
    </location>
</feature>
<protein>
    <recommendedName>
        <fullName evidence="1">Phosphate acyltransferase</fullName>
        <ecNumber evidence="1">2.3.1.274</ecNumber>
    </recommendedName>
    <alternativeName>
        <fullName evidence="1">Acyl-ACP phosphotransacylase</fullName>
    </alternativeName>
    <alternativeName>
        <fullName evidence="1">Acyl-[acyl-carrier-protein]--phosphate acyltransferase</fullName>
    </alternativeName>
    <alternativeName>
        <fullName evidence="1">Phosphate-acyl-ACP acyltransferase</fullName>
    </alternativeName>
</protein>
<organism>
    <name type="scientific">Moorella thermoacetica (strain ATCC 39073 / JCM 9320)</name>
    <dbReference type="NCBI Taxonomy" id="264732"/>
    <lineage>
        <taxon>Bacteria</taxon>
        <taxon>Bacillati</taxon>
        <taxon>Bacillota</taxon>
        <taxon>Clostridia</taxon>
        <taxon>Moorellales</taxon>
        <taxon>Moorellaceae</taxon>
        <taxon>Moorella</taxon>
    </lineage>
</organism>
<name>PLSX_MOOTA</name>
<proteinExistence type="inferred from homology"/>
<reference key="1">
    <citation type="journal article" date="2008" name="Environ. Microbiol.">
        <title>The complete genome sequence of Moorella thermoacetica (f. Clostridium thermoaceticum).</title>
        <authorList>
            <person name="Pierce E."/>
            <person name="Xie G."/>
            <person name="Barabote R.D."/>
            <person name="Saunders E."/>
            <person name="Han C.S."/>
            <person name="Detter J.C."/>
            <person name="Richardson P."/>
            <person name="Brettin T.S."/>
            <person name="Das A."/>
            <person name="Ljungdahl L.G."/>
            <person name="Ragsdale S.W."/>
        </authorList>
    </citation>
    <scope>NUCLEOTIDE SEQUENCE [LARGE SCALE GENOMIC DNA]</scope>
    <source>
        <strain>ATCC 39073 / JCM 9320</strain>
    </source>
</reference>
<gene>
    <name evidence="1" type="primary">plsX</name>
    <name type="ordered locus">Moth_0944</name>
</gene>
<sequence>MKIAVDAMGGDLAPREIVRGAVAAAGEGSAEIILVGDQRRLEEELALLHPSGRIEIYHTDQVITMDEQPALGLRRKREASIVVATRLVKEGRAEAVVSAGSTGTQMAAALLILGRSGKIQRPAIATLIPTLKGPKLLLDVGANVDCRPEHLYEFALMGNLYAARVMGIPNPRVGLLNIGTEACKGNEQTLGAYNLLRGAPLNFIGNVEAREILFGETDVIVCDGFVGNAILKFGEGLGQALFTMISREVNKSLRSRMGAALLLPALRGLKKQVDYTEYGGAPLLGVQGISIICHGSSNARAIKNAIKVAVRCVNQGLVTALGDLPGASEERMVKGCQSN</sequence>
<evidence type="ECO:0000255" key="1">
    <source>
        <dbReference type="HAMAP-Rule" id="MF_00019"/>
    </source>
</evidence>
<keyword id="KW-0963">Cytoplasm</keyword>
<keyword id="KW-0444">Lipid biosynthesis</keyword>
<keyword id="KW-0443">Lipid metabolism</keyword>
<keyword id="KW-0594">Phospholipid biosynthesis</keyword>
<keyword id="KW-1208">Phospholipid metabolism</keyword>
<keyword id="KW-0808">Transferase</keyword>
<comment type="function">
    <text evidence="1">Catalyzes the reversible formation of acyl-phosphate (acyl-PO(4)) from acyl-[acyl-carrier-protein] (acyl-ACP). This enzyme utilizes acyl-ACP as fatty acyl donor, but not acyl-CoA.</text>
</comment>
<comment type="catalytic activity">
    <reaction evidence="1">
        <text>a fatty acyl-[ACP] + phosphate = an acyl phosphate + holo-[ACP]</text>
        <dbReference type="Rhea" id="RHEA:42292"/>
        <dbReference type="Rhea" id="RHEA-COMP:9685"/>
        <dbReference type="Rhea" id="RHEA-COMP:14125"/>
        <dbReference type="ChEBI" id="CHEBI:43474"/>
        <dbReference type="ChEBI" id="CHEBI:59918"/>
        <dbReference type="ChEBI" id="CHEBI:64479"/>
        <dbReference type="ChEBI" id="CHEBI:138651"/>
        <dbReference type="EC" id="2.3.1.274"/>
    </reaction>
</comment>
<comment type="pathway">
    <text evidence="1">Lipid metabolism; phospholipid metabolism.</text>
</comment>
<comment type="subunit">
    <text evidence="1">Homodimer. Probably interacts with PlsY.</text>
</comment>
<comment type="subcellular location">
    <subcellularLocation>
        <location evidence="1">Cytoplasm</location>
    </subcellularLocation>
    <text evidence="1">Associated with the membrane possibly through PlsY.</text>
</comment>
<comment type="similarity">
    <text evidence="1">Belongs to the PlsX family.</text>
</comment>